<keyword id="KW-0004">4Fe-4S</keyword>
<keyword id="KW-1003">Cell membrane</keyword>
<keyword id="KW-0408">Iron</keyword>
<keyword id="KW-0411">Iron-sulfur</keyword>
<keyword id="KW-0472">Membrane</keyword>
<keyword id="KW-0479">Metal-binding</keyword>
<keyword id="KW-0520">NAD</keyword>
<keyword id="KW-0874">Quinone</keyword>
<keyword id="KW-1185">Reference proteome</keyword>
<keyword id="KW-0677">Repeat</keyword>
<keyword id="KW-1278">Translocase</keyword>
<sequence length="211" mass="23466">MANTDRPALPHKRAVPPSRADSGPRRRRTKLLDAVAGFGVTLGSMFKKTVTEEYPERPGPVAARYHGRHQLNRYPDGLEKCIGCELCAWACPADAIYVEGADNTEEERFSPGERYGRVYQINYLRCIGCGLCIEACPTRALTMTYDYELADDNRADLIYEKDRLLAPLLPEMAAPPHPRTPGATDKDYYLGNVTAEGLRGVRESQTTGDSR</sequence>
<reference key="1">
    <citation type="journal article" date="1998" name="Nature">
        <title>Deciphering the biology of Mycobacterium tuberculosis from the complete genome sequence.</title>
        <authorList>
            <person name="Cole S.T."/>
            <person name="Brosch R."/>
            <person name="Parkhill J."/>
            <person name="Garnier T."/>
            <person name="Churcher C.M."/>
            <person name="Harris D.E."/>
            <person name="Gordon S.V."/>
            <person name="Eiglmeier K."/>
            <person name="Gas S."/>
            <person name="Barry C.E. III"/>
            <person name="Tekaia F."/>
            <person name="Badcock K."/>
            <person name="Basham D."/>
            <person name="Brown D."/>
            <person name="Chillingworth T."/>
            <person name="Connor R."/>
            <person name="Davies R.M."/>
            <person name="Devlin K."/>
            <person name="Feltwell T."/>
            <person name="Gentles S."/>
            <person name="Hamlin N."/>
            <person name="Holroyd S."/>
            <person name="Hornsby T."/>
            <person name="Jagels K."/>
            <person name="Krogh A."/>
            <person name="McLean J."/>
            <person name="Moule S."/>
            <person name="Murphy L.D."/>
            <person name="Oliver S."/>
            <person name="Osborne J."/>
            <person name="Quail M.A."/>
            <person name="Rajandream M.A."/>
            <person name="Rogers J."/>
            <person name="Rutter S."/>
            <person name="Seeger K."/>
            <person name="Skelton S."/>
            <person name="Squares S."/>
            <person name="Squares R."/>
            <person name="Sulston J.E."/>
            <person name="Taylor K."/>
            <person name="Whitehead S."/>
            <person name="Barrell B.G."/>
        </authorList>
    </citation>
    <scope>NUCLEOTIDE SEQUENCE [LARGE SCALE GENOMIC DNA]</scope>
    <source>
        <strain>ATCC 25618 / H37Rv</strain>
    </source>
</reference>
<reference key="2">
    <citation type="journal article" date="2011" name="Mol. Cell. Proteomics">
        <title>Proteogenomic analysis of Mycobacterium tuberculosis by high resolution mass spectrometry.</title>
        <authorList>
            <person name="Kelkar D.S."/>
            <person name="Kumar D."/>
            <person name="Kumar P."/>
            <person name="Balakrishnan L."/>
            <person name="Muthusamy B."/>
            <person name="Yadav A.K."/>
            <person name="Shrivastava P."/>
            <person name="Marimuthu A."/>
            <person name="Anand S."/>
            <person name="Sundaram H."/>
            <person name="Kingsbury R."/>
            <person name="Harsha H.C."/>
            <person name="Nair B."/>
            <person name="Prasad T.S."/>
            <person name="Chauhan D.S."/>
            <person name="Katoch K."/>
            <person name="Katoch V.M."/>
            <person name="Kumar P."/>
            <person name="Chaerkady R."/>
            <person name="Ramachandran S."/>
            <person name="Dash D."/>
            <person name="Pandey A."/>
        </authorList>
    </citation>
    <scope>IDENTIFICATION BY MASS SPECTROMETRY [LARGE SCALE ANALYSIS]</scope>
    <source>
        <strain>ATCC 25618 / H37Rv</strain>
    </source>
</reference>
<comment type="function">
    <text evidence="1">NDH-1 shuttles electrons from NADH, via FMN and iron-sulfur (Fe-S) centers, to quinones in the respiratory chain. The immediate electron acceptor for the enzyme in this species is believed to be menaquinone. Couples the redox reaction to proton translocation (for every two electrons transferred, four hydrogen ions are translocated across the cytoplasmic membrane), and thus conserves the redox energy in a proton gradient.</text>
</comment>
<comment type="catalytic activity">
    <reaction evidence="1">
        <text>a quinone + NADH + 5 H(+)(in) = a quinol + NAD(+) + 4 H(+)(out)</text>
        <dbReference type="Rhea" id="RHEA:57888"/>
        <dbReference type="ChEBI" id="CHEBI:15378"/>
        <dbReference type="ChEBI" id="CHEBI:24646"/>
        <dbReference type="ChEBI" id="CHEBI:57540"/>
        <dbReference type="ChEBI" id="CHEBI:57945"/>
        <dbReference type="ChEBI" id="CHEBI:132124"/>
    </reaction>
</comment>
<comment type="cofactor">
    <cofactor evidence="1">
        <name>[4Fe-4S] cluster</name>
        <dbReference type="ChEBI" id="CHEBI:49883"/>
    </cofactor>
    <text evidence="1">Binds 2 [4Fe-4S] clusters per subunit.</text>
</comment>
<comment type="subunit">
    <text evidence="1">NDH-1 is composed of 14 different subunits. Subunits NuoA, H, J, K, L, M, N constitute the membrane sector of the complex.</text>
</comment>
<comment type="subcellular location">
    <subcellularLocation>
        <location evidence="1">Cell membrane</location>
        <topology evidence="1">Peripheral membrane protein</topology>
    </subcellularLocation>
</comment>
<comment type="similarity">
    <text evidence="1">Belongs to the complex I 23 kDa subunit family.</text>
</comment>
<accession>P9WJG9</accession>
<accession>L0TEQ5</accession>
<accession>P95173</accession>
<proteinExistence type="evidence at protein level"/>
<feature type="chain" id="PRO_0000118729" description="NADH-quinone oxidoreductase subunit I">
    <location>
        <begin position="1"/>
        <end position="211"/>
    </location>
</feature>
<feature type="domain" description="4Fe-4S ferredoxin-type 1" evidence="1">
    <location>
        <begin position="71"/>
        <end position="101"/>
    </location>
</feature>
<feature type="domain" description="4Fe-4S ferredoxin-type 2" evidence="1">
    <location>
        <begin position="117"/>
        <end position="146"/>
    </location>
</feature>
<feature type="region of interest" description="Disordered" evidence="2">
    <location>
        <begin position="1"/>
        <end position="27"/>
    </location>
</feature>
<feature type="binding site" evidence="1">
    <location>
        <position position="81"/>
    </location>
    <ligand>
        <name>[4Fe-4S] cluster</name>
        <dbReference type="ChEBI" id="CHEBI:49883"/>
        <label>1</label>
    </ligand>
</feature>
<feature type="binding site" evidence="1">
    <location>
        <position position="84"/>
    </location>
    <ligand>
        <name>[4Fe-4S] cluster</name>
        <dbReference type="ChEBI" id="CHEBI:49883"/>
        <label>1</label>
    </ligand>
</feature>
<feature type="binding site" evidence="1">
    <location>
        <position position="87"/>
    </location>
    <ligand>
        <name>[4Fe-4S] cluster</name>
        <dbReference type="ChEBI" id="CHEBI:49883"/>
        <label>1</label>
    </ligand>
</feature>
<feature type="binding site" evidence="1">
    <location>
        <position position="91"/>
    </location>
    <ligand>
        <name>[4Fe-4S] cluster</name>
        <dbReference type="ChEBI" id="CHEBI:49883"/>
        <label>2</label>
    </ligand>
</feature>
<feature type="binding site" evidence="1">
    <location>
        <position position="126"/>
    </location>
    <ligand>
        <name>[4Fe-4S] cluster</name>
        <dbReference type="ChEBI" id="CHEBI:49883"/>
        <label>2</label>
    </ligand>
</feature>
<feature type="binding site" evidence="1">
    <location>
        <position position="129"/>
    </location>
    <ligand>
        <name>[4Fe-4S] cluster</name>
        <dbReference type="ChEBI" id="CHEBI:49883"/>
        <label>2</label>
    </ligand>
</feature>
<feature type="binding site" evidence="1">
    <location>
        <position position="132"/>
    </location>
    <ligand>
        <name>[4Fe-4S] cluster</name>
        <dbReference type="ChEBI" id="CHEBI:49883"/>
        <label>2</label>
    </ligand>
</feature>
<feature type="binding site" evidence="1">
    <location>
        <position position="136"/>
    </location>
    <ligand>
        <name>[4Fe-4S] cluster</name>
        <dbReference type="ChEBI" id="CHEBI:49883"/>
        <label>1</label>
    </ligand>
</feature>
<organism>
    <name type="scientific">Mycobacterium tuberculosis (strain ATCC 25618 / H37Rv)</name>
    <dbReference type="NCBI Taxonomy" id="83332"/>
    <lineage>
        <taxon>Bacteria</taxon>
        <taxon>Bacillati</taxon>
        <taxon>Actinomycetota</taxon>
        <taxon>Actinomycetes</taxon>
        <taxon>Mycobacteriales</taxon>
        <taxon>Mycobacteriaceae</taxon>
        <taxon>Mycobacterium</taxon>
        <taxon>Mycobacterium tuberculosis complex</taxon>
    </lineage>
</organism>
<protein>
    <recommendedName>
        <fullName evidence="1">NADH-quinone oxidoreductase subunit I</fullName>
        <ecNumber evidence="1">7.1.1.-</ecNumber>
    </recommendedName>
    <alternativeName>
        <fullName evidence="1">NADH dehydrogenase I subunit I</fullName>
    </alternativeName>
    <alternativeName>
        <fullName evidence="1">NDH-1 subunit I</fullName>
    </alternativeName>
</protein>
<name>NUOI_MYCTU</name>
<evidence type="ECO:0000255" key="1">
    <source>
        <dbReference type="HAMAP-Rule" id="MF_01351"/>
    </source>
</evidence>
<evidence type="ECO:0000256" key="2">
    <source>
        <dbReference type="SAM" id="MobiDB-lite"/>
    </source>
</evidence>
<dbReference type="EC" id="7.1.1.-" evidence="1"/>
<dbReference type="EMBL" id="AL123456">
    <property type="protein sequence ID" value="CCP45964.1"/>
    <property type="molecule type" value="Genomic_DNA"/>
</dbReference>
<dbReference type="PIR" id="B70648">
    <property type="entry name" value="B70648"/>
</dbReference>
<dbReference type="RefSeq" id="NP_217669.1">
    <property type="nucleotide sequence ID" value="NC_000962.3"/>
</dbReference>
<dbReference type="RefSeq" id="WP_003899938.1">
    <property type="nucleotide sequence ID" value="NZ_NVQJ01000019.1"/>
</dbReference>
<dbReference type="SMR" id="P9WJG9"/>
<dbReference type="FunCoup" id="P9WJG9">
    <property type="interactions" value="379"/>
</dbReference>
<dbReference type="STRING" id="83332.Rv3153"/>
<dbReference type="PaxDb" id="83332-Rv3153"/>
<dbReference type="DNASU" id="887530"/>
<dbReference type="GeneID" id="887530"/>
<dbReference type="KEGG" id="mtu:Rv3153"/>
<dbReference type="KEGG" id="mtv:RVBD_3153"/>
<dbReference type="PATRIC" id="fig|83332.111.peg.3512"/>
<dbReference type="TubercuList" id="Rv3153"/>
<dbReference type="eggNOG" id="COG1143">
    <property type="taxonomic scope" value="Bacteria"/>
</dbReference>
<dbReference type="InParanoid" id="P9WJG9"/>
<dbReference type="OrthoDB" id="9808559at2"/>
<dbReference type="PhylomeDB" id="P9WJG9"/>
<dbReference type="Proteomes" id="UP000001584">
    <property type="component" value="Chromosome"/>
</dbReference>
<dbReference type="GO" id="GO:0005829">
    <property type="term" value="C:cytosol"/>
    <property type="evidence" value="ECO:0007005"/>
    <property type="project" value="MTBBASE"/>
</dbReference>
<dbReference type="GO" id="GO:0009274">
    <property type="term" value="C:peptidoglycan-based cell wall"/>
    <property type="evidence" value="ECO:0007005"/>
    <property type="project" value="MTBBASE"/>
</dbReference>
<dbReference type="GO" id="GO:0005886">
    <property type="term" value="C:plasma membrane"/>
    <property type="evidence" value="ECO:0007669"/>
    <property type="project" value="UniProtKB-SubCell"/>
</dbReference>
<dbReference type="GO" id="GO:0051539">
    <property type="term" value="F:4 iron, 4 sulfur cluster binding"/>
    <property type="evidence" value="ECO:0007669"/>
    <property type="project" value="UniProtKB-KW"/>
</dbReference>
<dbReference type="GO" id="GO:0005506">
    <property type="term" value="F:iron ion binding"/>
    <property type="evidence" value="ECO:0007669"/>
    <property type="project" value="UniProtKB-UniRule"/>
</dbReference>
<dbReference type="GO" id="GO:0050136">
    <property type="term" value="F:NADH:ubiquinone reductase (non-electrogenic) activity"/>
    <property type="evidence" value="ECO:0007669"/>
    <property type="project" value="UniProtKB-UniRule"/>
</dbReference>
<dbReference type="GO" id="GO:0048038">
    <property type="term" value="F:quinone binding"/>
    <property type="evidence" value="ECO:0007669"/>
    <property type="project" value="UniProtKB-KW"/>
</dbReference>
<dbReference type="GO" id="GO:0009060">
    <property type="term" value="P:aerobic respiration"/>
    <property type="evidence" value="ECO:0000318"/>
    <property type="project" value="GO_Central"/>
</dbReference>
<dbReference type="FunFam" id="3.30.70.3270:FF:000007">
    <property type="entry name" value="NADH-quinone oxidoreductase subunit I"/>
    <property type="match status" value="1"/>
</dbReference>
<dbReference type="Gene3D" id="3.30.70.3270">
    <property type="match status" value="1"/>
</dbReference>
<dbReference type="HAMAP" id="MF_01351">
    <property type="entry name" value="NDH1_NuoI"/>
    <property type="match status" value="1"/>
</dbReference>
<dbReference type="InterPro" id="IPR017896">
    <property type="entry name" value="4Fe4S_Fe-S-bd"/>
</dbReference>
<dbReference type="InterPro" id="IPR017900">
    <property type="entry name" value="4Fe4S_Fe_S_CS"/>
</dbReference>
<dbReference type="InterPro" id="IPR010226">
    <property type="entry name" value="NADH_quinone_OxRdtase_chainI"/>
</dbReference>
<dbReference type="NCBIfam" id="TIGR01971">
    <property type="entry name" value="NuoI"/>
    <property type="match status" value="1"/>
</dbReference>
<dbReference type="NCBIfam" id="NF004537">
    <property type="entry name" value="PRK05888.1-3"/>
    <property type="match status" value="1"/>
</dbReference>
<dbReference type="PANTHER" id="PTHR10849:SF20">
    <property type="entry name" value="NADH DEHYDROGENASE [UBIQUINONE] IRON-SULFUR PROTEIN 8, MITOCHONDRIAL"/>
    <property type="match status" value="1"/>
</dbReference>
<dbReference type="PANTHER" id="PTHR10849">
    <property type="entry name" value="NADH DEHYDROGENASE UBIQUINONE IRON-SULFUR PROTEIN 8, MITOCHONDRIAL"/>
    <property type="match status" value="1"/>
</dbReference>
<dbReference type="Pfam" id="PF12838">
    <property type="entry name" value="Fer4_7"/>
    <property type="match status" value="1"/>
</dbReference>
<dbReference type="SUPFAM" id="SSF54862">
    <property type="entry name" value="4Fe-4S ferredoxins"/>
    <property type="match status" value="1"/>
</dbReference>
<dbReference type="PROSITE" id="PS00198">
    <property type="entry name" value="4FE4S_FER_1"/>
    <property type="match status" value="2"/>
</dbReference>
<dbReference type="PROSITE" id="PS51379">
    <property type="entry name" value="4FE4S_FER_2"/>
    <property type="match status" value="2"/>
</dbReference>
<gene>
    <name evidence="1" type="primary">nuoI</name>
    <name type="ordered locus">Rv3153</name>
    <name type="ORF">MTCY03A2.05c</name>
</gene>